<reference key="1">
    <citation type="submission" date="2007-10" db="EMBL/GenBank/DDBJ databases">
        <title>Complete sequence of Methanococcus maripaludis C6.</title>
        <authorList>
            <consortium name="US DOE Joint Genome Institute"/>
            <person name="Copeland A."/>
            <person name="Lucas S."/>
            <person name="Lapidus A."/>
            <person name="Barry K."/>
            <person name="Glavina del Rio T."/>
            <person name="Dalin E."/>
            <person name="Tice H."/>
            <person name="Pitluck S."/>
            <person name="Clum A."/>
            <person name="Schmutz J."/>
            <person name="Larimer F."/>
            <person name="Land M."/>
            <person name="Hauser L."/>
            <person name="Kyrpides N."/>
            <person name="Mikhailova N."/>
            <person name="Sieprawska-Lupa M."/>
            <person name="Whitman W.B."/>
            <person name="Richardson P."/>
        </authorList>
    </citation>
    <scope>NUCLEOTIDE SEQUENCE [LARGE SCALE GENOMIC DNA]</scope>
    <source>
        <strain>C6 / ATCC BAA-1332</strain>
    </source>
</reference>
<organism>
    <name type="scientific">Methanococcus maripaludis (strain C6 / ATCC BAA-1332)</name>
    <dbReference type="NCBI Taxonomy" id="444158"/>
    <lineage>
        <taxon>Archaea</taxon>
        <taxon>Methanobacteriati</taxon>
        <taxon>Methanobacteriota</taxon>
        <taxon>Methanomada group</taxon>
        <taxon>Methanococci</taxon>
        <taxon>Methanococcales</taxon>
        <taxon>Methanococcaceae</taxon>
        <taxon>Methanococcus</taxon>
    </lineage>
</organism>
<feature type="chain" id="PRO_1000133725" description="Probable cobalt-precorrin-6B C(15)-methyltransferase (decarboxylating)">
    <location>
        <begin position="1"/>
        <end position="181"/>
    </location>
</feature>
<feature type="binding site" evidence="1">
    <location>
        <position position="16"/>
    </location>
    <ligand>
        <name>S-adenosyl-L-methionine</name>
        <dbReference type="ChEBI" id="CHEBI:59789"/>
    </ligand>
</feature>
<feature type="binding site" evidence="1">
    <location>
        <begin position="40"/>
        <end position="44"/>
    </location>
    <ligand>
        <name>S-adenosyl-L-methionine</name>
        <dbReference type="ChEBI" id="CHEBI:59789"/>
    </ligand>
</feature>
<feature type="binding site" evidence="1">
    <location>
        <position position="61"/>
    </location>
    <ligand>
        <name>S-adenosyl-L-methionine</name>
        <dbReference type="ChEBI" id="CHEBI:59789"/>
    </ligand>
</feature>
<feature type="binding site" evidence="1">
    <location>
        <position position="89"/>
    </location>
    <ligand>
        <name>S-adenosyl-L-methionine</name>
        <dbReference type="ChEBI" id="CHEBI:59789"/>
    </ligand>
</feature>
<sequence>MIQDSEFFRMEGVPITKEEIRAVSIGKLNLDPEDIVLDIGCGSGGMSVEIAKRSKFVYSIDNSEDAKNTTSINLKKFKIENCEVFLGDAKDLISKFDFNKVFIGGTQNIEQILEILKEKKVEKVVANTIVLENGVKIISKFEELGYNVDFVNVSVSYGKKISSGHIMLSKNPITIITATLK</sequence>
<gene>
    <name evidence="1" type="primary">cbiT</name>
    <name type="ordered locus">MmarC6_1451</name>
</gene>
<protein>
    <recommendedName>
        <fullName evidence="1">Probable cobalt-precorrin-6B C(15)-methyltransferase (decarboxylating)</fullName>
        <ecNumber evidence="1">2.1.1.196</ecNumber>
    </recommendedName>
</protein>
<comment type="function">
    <text evidence="1">Catalyzes the methylation of C-15 in cobalt-precorrin-6B followed by the decarboxylation of C-12 to form cobalt-precorrin-7.</text>
</comment>
<comment type="catalytic activity">
    <reaction evidence="1">
        <text>Co-precorrin-6B + S-adenosyl-L-methionine = Co-precorrin-7 + S-adenosyl-L-homocysteine + CO2</text>
        <dbReference type="Rhea" id="RHEA:36067"/>
        <dbReference type="ChEBI" id="CHEBI:16526"/>
        <dbReference type="ChEBI" id="CHEBI:57856"/>
        <dbReference type="ChEBI" id="CHEBI:59789"/>
        <dbReference type="ChEBI" id="CHEBI:70791"/>
        <dbReference type="ChEBI" id="CHEBI:72780"/>
        <dbReference type="EC" id="2.1.1.196"/>
    </reaction>
</comment>
<comment type="pathway">
    <text evidence="1">Cofactor biosynthesis; adenosylcobalamin biosynthesis; cob(II)yrinate a,c-diamide from sirohydrochlorin (anaerobic route): step 8/10.</text>
</comment>
<comment type="similarity">
    <text evidence="1">Belongs to the methyltransferase superfamily. Archaeal-type CbiT family.</text>
</comment>
<name>CBIT_METM6</name>
<proteinExistence type="inferred from homology"/>
<evidence type="ECO:0000255" key="1">
    <source>
        <dbReference type="HAMAP-Rule" id="MF_00786"/>
    </source>
</evidence>
<accession>A9AA91</accession>
<dbReference type="EC" id="2.1.1.196" evidence="1"/>
<dbReference type="EMBL" id="CP000867">
    <property type="protein sequence ID" value="ABX02264.1"/>
    <property type="molecule type" value="Genomic_DNA"/>
</dbReference>
<dbReference type="SMR" id="A9AA91"/>
<dbReference type="STRING" id="444158.MmarC6_1451"/>
<dbReference type="KEGG" id="mmx:MmarC6_1451"/>
<dbReference type="eggNOG" id="arCOG00977">
    <property type="taxonomic scope" value="Archaea"/>
</dbReference>
<dbReference type="HOGENOM" id="CLU_094143_0_0_2"/>
<dbReference type="OrthoDB" id="6027at2157"/>
<dbReference type="PhylomeDB" id="A9AA91"/>
<dbReference type="UniPathway" id="UPA00148">
    <property type="reaction ID" value="UER00229"/>
</dbReference>
<dbReference type="GO" id="GO:0043776">
    <property type="term" value="F:cobalt-precorrin-6B C5-methyltransferase activity"/>
    <property type="evidence" value="ECO:0007669"/>
    <property type="project" value="RHEA"/>
</dbReference>
<dbReference type="GO" id="GO:0008276">
    <property type="term" value="F:protein methyltransferase activity"/>
    <property type="evidence" value="ECO:0007669"/>
    <property type="project" value="InterPro"/>
</dbReference>
<dbReference type="GO" id="GO:0019251">
    <property type="term" value="P:anaerobic cobalamin biosynthetic process"/>
    <property type="evidence" value="ECO:0007669"/>
    <property type="project" value="UniProtKB-UniRule"/>
</dbReference>
<dbReference type="GO" id="GO:0032259">
    <property type="term" value="P:methylation"/>
    <property type="evidence" value="ECO:0007669"/>
    <property type="project" value="UniProtKB-KW"/>
</dbReference>
<dbReference type="CDD" id="cd02440">
    <property type="entry name" value="AdoMet_MTases"/>
    <property type="match status" value="1"/>
</dbReference>
<dbReference type="Gene3D" id="3.40.50.150">
    <property type="entry name" value="Vaccinia Virus protein VP39"/>
    <property type="match status" value="1"/>
</dbReference>
<dbReference type="HAMAP" id="MF_00786">
    <property type="entry name" value="CbiT"/>
    <property type="match status" value="1"/>
</dbReference>
<dbReference type="InterPro" id="IPR023475">
    <property type="entry name" value="CbiT"/>
</dbReference>
<dbReference type="InterPro" id="IPR014008">
    <property type="entry name" value="Cbl_synth_MTase_CbiT"/>
</dbReference>
<dbReference type="InterPro" id="IPR050714">
    <property type="entry name" value="Cobalamin_biosynth_MTase"/>
</dbReference>
<dbReference type="InterPro" id="IPR025714">
    <property type="entry name" value="Methyltranfer_dom"/>
</dbReference>
<dbReference type="InterPro" id="IPR029063">
    <property type="entry name" value="SAM-dependent_MTases_sf"/>
</dbReference>
<dbReference type="NCBIfam" id="TIGR02469">
    <property type="entry name" value="CbiT"/>
    <property type="match status" value="1"/>
</dbReference>
<dbReference type="PANTHER" id="PTHR43182">
    <property type="entry name" value="COBALT-PRECORRIN-6B C(15)-METHYLTRANSFERASE (DECARBOXYLATING)"/>
    <property type="match status" value="1"/>
</dbReference>
<dbReference type="PANTHER" id="PTHR43182:SF1">
    <property type="entry name" value="COBALT-PRECORRIN-7 C(5)-METHYLTRANSFERASE"/>
    <property type="match status" value="1"/>
</dbReference>
<dbReference type="Pfam" id="PF13847">
    <property type="entry name" value="Methyltransf_31"/>
    <property type="match status" value="1"/>
</dbReference>
<dbReference type="SUPFAM" id="SSF53335">
    <property type="entry name" value="S-adenosyl-L-methionine-dependent methyltransferases"/>
    <property type="match status" value="1"/>
</dbReference>
<keyword id="KW-0169">Cobalamin biosynthesis</keyword>
<keyword id="KW-0489">Methyltransferase</keyword>
<keyword id="KW-0949">S-adenosyl-L-methionine</keyword>
<keyword id="KW-0808">Transferase</keyword>